<accession>B2SS66</accession>
<name>BIOF_XANOP</name>
<feature type="chain" id="PRO_0000381146" description="8-amino-7-oxononanoate synthase">
    <location>
        <begin position="1"/>
        <end position="401"/>
    </location>
</feature>
<feature type="binding site" evidence="1">
    <location>
        <position position="24"/>
    </location>
    <ligand>
        <name>substrate</name>
    </ligand>
</feature>
<feature type="binding site" evidence="1">
    <location>
        <begin position="111"/>
        <end position="112"/>
    </location>
    <ligand>
        <name>pyridoxal 5'-phosphate</name>
        <dbReference type="ChEBI" id="CHEBI:597326"/>
    </ligand>
</feature>
<feature type="binding site" evidence="1">
    <location>
        <position position="137"/>
    </location>
    <ligand>
        <name>substrate</name>
    </ligand>
</feature>
<feature type="binding site" evidence="1">
    <location>
        <position position="183"/>
    </location>
    <ligand>
        <name>pyridoxal 5'-phosphate</name>
        <dbReference type="ChEBI" id="CHEBI:597326"/>
    </ligand>
</feature>
<feature type="binding site" evidence="1">
    <location>
        <position position="211"/>
    </location>
    <ligand>
        <name>pyridoxal 5'-phosphate</name>
        <dbReference type="ChEBI" id="CHEBI:597326"/>
    </ligand>
</feature>
<feature type="binding site" evidence="1">
    <location>
        <position position="240"/>
    </location>
    <ligand>
        <name>pyridoxal 5'-phosphate</name>
        <dbReference type="ChEBI" id="CHEBI:597326"/>
    </ligand>
</feature>
<feature type="binding site" evidence="1">
    <location>
        <position position="357"/>
    </location>
    <ligand>
        <name>substrate</name>
    </ligand>
</feature>
<feature type="modified residue" description="N6-(pyridoxal phosphate)lysine" evidence="1">
    <location>
        <position position="243"/>
    </location>
</feature>
<keyword id="KW-0093">Biotin biosynthesis</keyword>
<keyword id="KW-0663">Pyridoxal phosphate</keyword>
<keyword id="KW-0808">Transferase</keyword>
<gene>
    <name evidence="1" type="primary">bioF</name>
    <name type="ordered locus">PXO_02875</name>
</gene>
<reference key="1">
    <citation type="journal article" date="2008" name="BMC Genomics">
        <title>Genome sequence and rapid evolution of the rice pathogen Xanthomonas oryzae pv. oryzae PXO99A.</title>
        <authorList>
            <person name="Salzberg S.L."/>
            <person name="Sommer D.D."/>
            <person name="Schatz M.C."/>
            <person name="Phillippy A.M."/>
            <person name="Rabinowicz P.D."/>
            <person name="Tsuge S."/>
            <person name="Furutani A."/>
            <person name="Ochiai H."/>
            <person name="Delcher A.L."/>
            <person name="Kelley D."/>
            <person name="Madupu R."/>
            <person name="Puiu D."/>
            <person name="Radune D."/>
            <person name="Shumway M."/>
            <person name="Trapnell C."/>
            <person name="Aparna G."/>
            <person name="Jha G."/>
            <person name="Pandey A."/>
            <person name="Patil P.B."/>
            <person name="Ishihara H."/>
            <person name="Meyer D.F."/>
            <person name="Szurek B."/>
            <person name="Verdier V."/>
            <person name="Koebnik R."/>
            <person name="Dow J.M."/>
            <person name="Ryan R.P."/>
            <person name="Hirata H."/>
            <person name="Tsuyumu S."/>
            <person name="Won Lee S."/>
            <person name="Seo Y.-S."/>
            <person name="Sriariyanum M."/>
            <person name="Ronald P.C."/>
            <person name="Sonti R.V."/>
            <person name="Van Sluys M.-A."/>
            <person name="Leach J.E."/>
            <person name="White F.F."/>
            <person name="Bogdanove A.J."/>
        </authorList>
    </citation>
    <scope>NUCLEOTIDE SEQUENCE [LARGE SCALE GENOMIC DNA]</scope>
    <source>
        <strain>PXO99A</strain>
    </source>
</reference>
<sequence>MARPDLHGRISSLRKLHVAQDRVRVRRQVGRRDGVRLEIDGRWLTGFCSNDYLGLSQQFEVIAALQDAAARDGAGATASHLICGHHTAHETLEREIAEWLGYPSALLFGNGFIANLAVQQALLSEEDDVCVQDRLNHASLLDATRLAGCRLRRYPHLDVEGAMRQLKGAPEGAAMLASDAVFSMDGDVAPLRALSLVARMQDALFYVDDAHGVGVLGPQGRGCVADAGLGVAEVPLQLVTLGKALGGYGAVVVGDDALVRHLAETARPYIYTTALPPAQVAATLAAVRLARRDDWRRARLVELIAAFRDGARKHGFELMASDTPIQPLLCGEEATVMAMSAALEQAGFMVGAIRPPTVPEGKARLRVTLSALHTPQQVQALIDAIVQARDVVSRQPLRASA</sequence>
<proteinExistence type="inferred from homology"/>
<dbReference type="EC" id="2.3.1.47" evidence="1"/>
<dbReference type="EMBL" id="CP000967">
    <property type="protein sequence ID" value="ACD61341.1"/>
    <property type="status" value="ALT_INIT"/>
    <property type="molecule type" value="Genomic_DNA"/>
</dbReference>
<dbReference type="SMR" id="B2SS66"/>
<dbReference type="KEGG" id="xop:PXO_02875"/>
<dbReference type="eggNOG" id="COG0156">
    <property type="taxonomic scope" value="Bacteria"/>
</dbReference>
<dbReference type="HOGENOM" id="CLU_015846_11_2_6"/>
<dbReference type="UniPathway" id="UPA00078"/>
<dbReference type="Proteomes" id="UP000001740">
    <property type="component" value="Chromosome"/>
</dbReference>
<dbReference type="GO" id="GO:0008710">
    <property type="term" value="F:8-amino-7-oxononanoate synthase activity"/>
    <property type="evidence" value="ECO:0007669"/>
    <property type="project" value="UniProtKB-UniRule"/>
</dbReference>
<dbReference type="GO" id="GO:0030170">
    <property type="term" value="F:pyridoxal phosphate binding"/>
    <property type="evidence" value="ECO:0007669"/>
    <property type="project" value="UniProtKB-UniRule"/>
</dbReference>
<dbReference type="GO" id="GO:0009102">
    <property type="term" value="P:biotin biosynthetic process"/>
    <property type="evidence" value="ECO:0007669"/>
    <property type="project" value="UniProtKB-UniRule"/>
</dbReference>
<dbReference type="Gene3D" id="3.90.1150.10">
    <property type="entry name" value="Aspartate Aminotransferase, domain 1"/>
    <property type="match status" value="1"/>
</dbReference>
<dbReference type="Gene3D" id="3.40.640.10">
    <property type="entry name" value="Type I PLP-dependent aspartate aminotransferase-like (Major domain)"/>
    <property type="match status" value="1"/>
</dbReference>
<dbReference type="HAMAP" id="MF_01693">
    <property type="entry name" value="BioF_aminotrans_2"/>
    <property type="match status" value="1"/>
</dbReference>
<dbReference type="InterPro" id="IPR004839">
    <property type="entry name" value="Aminotransferase_I/II_large"/>
</dbReference>
<dbReference type="InterPro" id="IPR050087">
    <property type="entry name" value="AON_synthase_class-II"/>
</dbReference>
<dbReference type="InterPro" id="IPR004723">
    <property type="entry name" value="AONS_Archaea/Proteobacteria"/>
</dbReference>
<dbReference type="InterPro" id="IPR022834">
    <property type="entry name" value="AONS_Proteobacteria"/>
</dbReference>
<dbReference type="InterPro" id="IPR015424">
    <property type="entry name" value="PyrdxlP-dep_Trfase"/>
</dbReference>
<dbReference type="InterPro" id="IPR015421">
    <property type="entry name" value="PyrdxlP-dep_Trfase_major"/>
</dbReference>
<dbReference type="InterPro" id="IPR015422">
    <property type="entry name" value="PyrdxlP-dep_Trfase_small"/>
</dbReference>
<dbReference type="NCBIfam" id="TIGR00858">
    <property type="entry name" value="bioF"/>
    <property type="match status" value="1"/>
</dbReference>
<dbReference type="PANTHER" id="PTHR13693:SF100">
    <property type="entry name" value="8-AMINO-7-OXONONANOATE SYNTHASE"/>
    <property type="match status" value="1"/>
</dbReference>
<dbReference type="PANTHER" id="PTHR13693">
    <property type="entry name" value="CLASS II AMINOTRANSFERASE/8-AMINO-7-OXONONANOATE SYNTHASE"/>
    <property type="match status" value="1"/>
</dbReference>
<dbReference type="Pfam" id="PF00155">
    <property type="entry name" value="Aminotran_1_2"/>
    <property type="match status" value="1"/>
</dbReference>
<dbReference type="SUPFAM" id="SSF53383">
    <property type="entry name" value="PLP-dependent transferases"/>
    <property type="match status" value="1"/>
</dbReference>
<dbReference type="PROSITE" id="PS00599">
    <property type="entry name" value="AA_TRANSFER_CLASS_2"/>
    <property type="match status" value="1"/>
</dbReference>
<organism>
    <name type="scientific">Xanthomonas oryzae pv. oryzae (strain PXO99A)</name>
    <dbReference type="NCBI Taxonomy" id="360094"/>
    <lineage>
        <taxon>Bacteria</taxon>
        <taxon>Pseudomonadati</taxon>
        <taxon>Pseudomonadota</taxon>
        <taxon>Gammaproteobacteria</taxon>
        <taxon>Lysobacterales</taxon>
        <taxon>Lysobacteraceae</taxon>
        <taxon>Xanthomonas</taxon>
    </lineage>
</organism>
<evidence type="ECO:0000255" key="1">
    <source>
        <dbReference type="HAMAP-Rule" id="MF_01693"/>
    </source>
</evidence>
<evidence type="ECO:0000305" key="2"/>
<comment type="function">
    <text evidence="1">Catalyzes the decarboxylative condensation of pimeloyl-[acyl-carrier protein] and L-alanine to produce 8-amino-7-oxononanoate (AON), [acyl-carrier protein], and carbon dioxide.</text>
</comment>
<comment type="catalytic activity">
    <reaction evidence="1">
        <text>6-carboxyhexanoyl-[ACP] + L-alanine + H(+) = (8S)-8-amino-7-oxononanoate + holo-[ACP] + CO2</text>
        <dbReference type="Rhea" id="RHEA:42288"/>
        <dbReference type="Rhea" id="RHEA-COMP:9685"/>
        <dbReference type="Rhea" id="RHEA-COMP:9955"/>
        <dbReference type="ChEBI" id="CHEBI:15378"/>
        <dbReference type="ChEBI" id="CHEBI:16526"/>
        <dbReference type="ChEBI" id="CHEBI:57972"/>
        <dbReference type="ChEBI" id="CHEBI:64479"/>
        <dbReference type="ChEBI" id="CHEBI:78846"/>
        <dbReference type="ChEBI" id="CHEBI:149468"/>
        <dbReference type="EC" id="2.3.1.47"/>
    </reaction>
</comment>
<comment type="cofactor">
    <cofactor evidence="1">
        <name>pyridoxal 5'-phosphate</name>
        <dbReference type="ChEBI" id="CHEBI:597326"/>
    </cofactor>
</comment>
<comment type="pathway">
    <text evidence="1">Cofactor biosynthesis; biotin biosynthesis.</text>
</comment>
<comment type="subunit">
    <text evidence="1">Homodimer.</text>
</comment>
<comment type="similarity">
    <text evidence="1">Belongs to the class-II pyridoxal-phosphate-dependent aminotransferase family. BioF subfamily.</text>
</comment>
<comment type="sequence caution" evidence="2">
    <conflict type="erroneous initiation">
        <sequence resource="EMBL-CDS" id="ACD61341"/>
    </conflict>
</comment>
<protein>
    <recommendedName>
        <fullName evidence="1">8-amino-7-oxononanoate synthase</fullName>
        <shortName evidence="1">AONS</shortName>
        <ecNumber evidence="1">2.3.1.47</ecNumber>
    </recommendedName>
    <alternativeName>
        <fullName evidence="1">7-keto-8-amino-pelargonic acid synthase</fullName>
        <shortName evidence="1">7-KAP synthase</shortName>
        <shortName evidence="1">KAPA synthase</shortName>
    </alternativeName>
    <alternativeName>
        <fullName evidence="1">8-amino-7-ketopelargonate synthase</fullName>
    </alternativeName>
</protein>